<gene>
    <name evidence="1" type="primary">trpC</name>
    <name type="ordered locus">BMEI0843</name>
</gene>
<sequence length="268" mass="29269">MSTDILRKIEAYKREEIAAAKARLALDELKARTRDQSAPRGFLKALEAKRAAGQFALIAEIKKASPSKGLIRPDFDPPALAKAYEEGGAACLSVLTDTPSFQGAPEFLTAARQACSLPALRKDFLFDPYQVYEARSWGADCILIIMASVDDDLAKELEDTAFALGMDALIEVHDEAEMERALKLSSRLLGVNNRNLRSFEVNLAVSERLAKMAPSDRLLVGESGIFTHEDCLRLEKSGIGTFLIGESLMRQHDVAAATRALLTGAEKL</sequence>
<reference key="1">
    <citation type="journal article" date="2002" name="Proc. Natl. Acad. Sci. U.S.A.">
        <title>The genome sequence of the facultative intracellular pathogen Brucella melitensis.</title>
        <authorList>
            <person name="DelVecchio V.G."/>
            <person name="Kapatral V."/>
            <person name="Redkar R.J."/>
            <person name="Patra G."/>
            <person name="Mujer C."/>
            <person name="Los T."/>
            <person name="Ivanova N."/>
            <person name="Anderson I."/>
            <person name="Bhattacharyya A."/>
            <person name="Lykidis A."/>
            <person name="Reznik G."/>
            <person name="Jablonski L."/>
            <person name="Larsen N."/>
            <person name="D'Souza M."/>
            <person name="Bernal A."/>
            <person name="Mazur M."/>
            <person name="Goltsman E."/>
            <person name="Selkov E."/>
            <person name="Elzer P.H."/>
            <person name="Hagius S."/>
            <person name="O'Callaghan D."/>
            <person name="Letesson J.-J."/>
            <person name="Haselkorn R."/>
            <person name="Kyrpides N.C."/>
            <person name="Overbeek R."/>
        </authorList>
    </citation>
    <scope>NUCLEOTIDE SEQUENCE [LARGE SCALE GENOMIC DNA]</scope>
    <source>
        <strain>ATCC 23456 / CCUG 17765 / NCTC 10094 / 16M</strain>
    </source>
</reference>
<evidence type="ECO:0000255" key="1">
    <source>
        <dbReference type="HAMAP-Rule" id="MF_00134"/>
    </source>
</evidence>
<evidence type="ECO:0000305" key="2"/>
<comment type="catalytic activity">
    <reaction evidence="1">
        <text>1-(2-carboxyphenylamino)-1-deoxy-D-ribulose 5-phosphate + H(+) = (1S,2R)-1-C-(indol-3-yl)glycerol 3-phosphate + CO2 + H2O</text>
        <dbReference type="Rhea" id="RHEA:23476"/>
        <dbReference type="ChEBI" id="CHEBI:15377"/>
        <dbReference type="ChEBI" id="CHEBI:15378"/>
        <dbReference type="ChEBI" id="CHEBI:16526"/>
        <dbReference type="ChEBI" id="CHEBI:58613"/>
        <dbReference type="ChEBI" id="CHEBI:58866"/>
        <dbReference type="EC" id="4.1.1.48"/>
    </reaction>
</comment>
<comment type="pathway">
    <text evidence="1">Amino-acid biosynthesis; L-tryptophan biosynthesis; L-tryptophan from chorismate: step 4/5.</text>
</comment>
<comment type="similarity">
    <text evidence="1">Belongs to the TrpC family.</text>
</comment>
<comment type="sequence caution" evidence="2">
    <conflict type="erroneous initiation">
        <sequence resource="EMBL-CDS" id="AAL52024"/>
    </conflict>
</comment>
<name>TRPC_BRUME</name>
<proteinExistence type="inferred from homology"/>
<protein>
    <recommendedName>
        <fullName evidence="1">Indole-3-glycerol phosphate synthase</fullName>
        <shortName evidence="1">IGPS</shortName>
        <ecNumber evidence="1">4.1.1.48</ecNumber>
    </recommendedName>
</protein>
<dbReference type="EC" id="4.1.1.48" evidence="1"/>
<dbReference type="EMBL" id="AE008917">
    <property type="protein sequence ID" value="AAL52024.1"/>
    <property type="status" value="ALT_INIT"/>
    <property type="molecule type" value="Genomic_DNA"/>
</dbReference>
<dbReference type="PIR" id="AE3357">
    <property type="entry name" value="AE3357"/>
</dbReference>
<dbReference type="RefSeq" id="WP_002964269.1">
    <property type="nucleotide sequence ID" value="NZ_CP007763.1"/>
</dbReference>
<dbReference type="SMR" id="P66988"/>
<dbReference type="GeneID" id="93016523"/>
<dbReference type="KEGG" id="bme:BMEI0843"/>
<dbReference type="KEGG" id="bmel:DK63_577"/>
<dbReference type="PATRIC" id="fig|224914.52.peg.601"/>
<dbReference type="eggNOG" id="COG0134">
    <property type="taxonomic scope" value="Bacteria"/>
</dbReference>
<dbReference type="PhylomeDB" id="P66988"/>
<dbReference type="UniPathway" id="UPA00035">
    <property type="reaction ID" value="UER00043"/>
</dbReference>
<dbReference type="Proteomes" id="UP000000419">
    <property type="component" value="Chromosome I"/>
</dbReference>
<dbReference type="GO" id="GO:0004425">
    <property type="term" value="F:indole-3-glycerol-phosphate synthase activity"/>
    <property type="evidence" value="ECO:0007669"/>
    <property type="project" value="UniProtKB-UniRule"/>
</dbReference>
<dbReference type="GO" id="GO:0004640">
    <property type="term" value="F:phosphoribosylanthranilate isomerase activity"/>
    <property type="evidence" value="ECO:0007669"/>
    <property type="project" value="TreeGrafter"/>
</dbReference>
<dbReference type="GO" id="GO:0000162">
    <property type="term" value="P:L-tryptophan biosynthetic process"/>
    <property type="evidence" value="ECO:0007669"/>
    <property type="project" value="UniProtKB-UniRule"/>
</dbReference>
<dbReference type="CDD" id="cd00331">
    <property type="entry name" value="IGPS"/>
    <property type="match status" value="1"/>
</dbReference>
<dbReference type="FunFam" id="3.20.20.70:FF:000024">
    <property type="entry name" value="Indole-3-glycerol phosphate synthase"/>
    <property type="match status" value="1"/>
</dbReference>
<dbReference type="Gene3D" id="3.20.20.70">
    <property type="entry name" value="Aldolase class I"/>
    <property type="match status" value="1"/>
</dbReference>
<dbReference type="HAMAP" id="MF_00134_B">
    <property type="entry name" value="IGPS_B"/>
    <property type="match status" value="1"/>
</dbReference>
<dbReference type="InterPro" id="IPR013785">
    <property type="entry name" value="Aldolase_TIM"/>
</dbReference>
<dbReference type="InterPro" id="IPR045186">
    <property type="entry name" value="Indole-3-glycerol_P_synth"/>
</dbReference>
<dbReference type="InterPro" id="IPR013798">
    <property type="entry name" value="Indole-3-glycerol_P_synth_dom"/>
</dbReference>
<dbReference type="InterPro" id="IPR001468">
    <property type="entry name" value="Indole-3-GlycerolPSynthase_CS"/>
</dbReference>
<dbReference type="InterPro" id="IPR011060">
    <property type="entry name" value="RibuloseP-bd_barrel"/>
</dbReference>
<dbReference type="NCBIfam" id="NF001370">
    <property type="entry name" value="PRK00278.1-2"/>
    <property type="match status" value="1"/>
</dbReference>
<dbReference type="NCBIfam" id="NF001373">
    <property type="entry name" value="PRK00278.1-6"/>
    <property type="match status" value="1"/>
</dbReference>
<dbReference type="NCBIfam" id="NF001377">
    <property type="entry name" value="PRK00278.2-4"/>
    <property type="match status" value="1"/>
</dbReference>
<dbReference type="PANTHER" id="PTHR22854:SF2">
    <property type="entry name" value="INDOLE-3-GLYCEROL-PHOSPHATE SYNTHASE"/>
    <property type="match status" value="1"/>
</dbReference>
<dbReference type="PANTHER" id="PTHR22854">
    <property type="entry name" value="TRYPTOPHAN BIOSYNTHESIS PROTEIN"/>
    <property type="match status" value="1"/>
</dbReference>
<dbReference type="Pfam" id="PF00218">
    <property type="entry name" value="IGPS"/>
    <property type="match status" value="1"/>
</dbReference>
<dbReference type="SUPFAM" id="SSF51366">
    <property type="entry name" value="Ribulose-phoshate binding barrel"/>
    <property type="match status" value="1"/>
</dbReference>
<dbReference type="PROSITE" id="PS00614">
    <property type="entry name" value="IGPS"/>
    <property type="match status" value="1"/>
</dbReference>
<accession>P66988</accession>
<accession>Q8G0F4</accession>
<accession>Q8YHF8</accession>
<feature type="chain" id="PRO_0000154216" description="Indole-3-glycerol phosphate synthase">
    <location>
        <begin position="1"/>
        <end position="268"/>
    </location>
</feature>
<keyword id="KW-0028">Amino-acid biosynthesis</keyword>
<keyword id="KW-0057">Aromatic amino acid biosynthesis</keyword>
<keyword id="KW-0210">Decarboxylase</keyword>
<keyword id="KW-0456">Lyase</keyword>
<keyword id="KW-0822">Tryptophan biosynthesis</keyword>
<organism>
    <name type="scientific">Brucella melitensis biotype 1 (strain ATCC 23456 / CCUG 17765 / NCTC 10094 / 16M)</name>
    <dbReference type="NCBI Taxonomy" id="224914"/>
    <lineage>
        <taxon>Bacteria</taxon>
        <taxon>Pseudomonadati</taxon>
        <taxon>Pseudomonadota</taxon>
        <taxon>Alphaproteobacteria</taxon>
        <taxon>Hyphomicrobiales</taxon>
        <taxon>Brucellaceae</taxon>
        <taxon>Brucella/Ochrobactrum group</taxon>
        <taxon>Brucella</taxon>
    </lineage>
</organism>